<organism>
    <name type="scientific">Desulfotalea psychrophila (strain LSv54 / DSM 12343)</name>
    <dbReference type="NCBI Taxonomy" id="177439"/>
    <lineage>
        <taxon>Bacteria</taxon>
        <taxon>Pseudomonadati</taxon>
        <taxon>Thermodesulfobacteriota</taxon>
        <taxon>Desulfobulbia</taxon>
        <taxon>Desulfobulbales</taxon>
        <taxon>Desulfocapsaceae</taxon>
        <taxon>Desulfotalea</taxon>
    </lineage>
</organism>
<accession>Q6AP44</accession>
<feature type="chain" id="PRO_0000132378" description="Small ribosomal subunit protein uS4">
    <location>
        <begin position="1"/>
        <end position="210"/>
    </location>
</feature>
<feature type="domain" description="S4 RNA-binding" evidence="1">
    <location>
        <begin position="99"/>
        <end position="170"/>
    </location>
</feature>
<reference key="1">
    <citation type="journal article" date="2004" name="Environ. Microbiol.">
        <title>The genome of Desulfotalea psychrophila, a sulfate-reducing bacterium from permanently cold Arctic sediments.</title>
        <authorList>
            <person name="Rabus R."/>
            <person name="Ruepp A."/>
            <person name="Frickey T."/>
            <person name="Rattei T."/>
            <person name="Fartmann B."/>
            <person name="Stark M."/>
            <person name="Bauer M."/>
            <person name="Zibat A."/>
            <person name="Lombardot T."/>
            <person name="Becker I."/>
            <person name="Amann J."/>
            <person name="Gellner K."/>
            <person name="Teeling H."/>
            <person name="Leuschner W.D."/>
            <person name="Gloeckner F.-O."/>
            <person name="Lupas A.N."/>
            <person name="Amann R."/>
            <person name="Klenk H.-P."/>
        </authorList>
    </citation>
    <scope>NUCLEOTIDE SEQUENCE [LARGE SCALE GENOMIC DNA]</scope>
    <source>
        <strain>DSM 12343 / LSv54</strain>
    </source>
</reference>
<proteinExistence type="inferred from homology"/>
<protein>
    <recommendedName>
        <fullName evidence="1">Small ribosomal subunit protein uS4</fullName>
    </recommendedName>
    <alternativeName>
        <fullName evidence="2">30S ribosomal protein S4</fullName>
    </alternativeName>
</protein>
<dbReference type="EMBL" id="CR522870">
    <property type="protein sequence ID" value="CAG35880.1"/>
    <property type="molecule type" value="Genomic_DNA"/>
</dbReference>
<dbReference type="RefSeq" id="WP_011188392.1">
    <property type="nucleotide sequence ID" value="NC_006138.1"/>
</dbReference>
<dbReference type="SMR" id="Q6AP44"/>
<dbReference type="STRING" id="177439.DP1151"/>
<dbReference type="KEGG" id="dps:DP1151"/>
<dbReference type="eggNOG" id="COG0522">
    <property type="taxonomic scope" value="Bacteria"/>
</dbReference>
<dbReference type="HOGENOM" id="CLU_092403_0_2_7"/>
<dbReference type="OrthoDB" id="9803672at2"/>
<dbReference type="Proteomes" id="UP000000602">
    <property type="component" value="Chromosome"/>
</dbReference>
<dbReference type="GO" id="GO:0015935">
    <property type="term" value="C:small ribosomal subunit"/>
    <property type="evidence" value="ECO:0007669"/>
    <property type="project" value="InterPro"/>
</dbReference>
<dbReference type="GO" id="GO:0019843">
    <property type="term" value="F:rRNA binding"/>
    <property type="evidence" value="ECO:0007669"/>
    <property type="project" value="UniProtKB-UniRule"/>
</dbReference>
<dbReference type="GO" id="GO:0003735">
    <property type="term" value="F:structural constituent of ribosome"/>
    <property type="evidence" value="ECO:0007669"/>
    <property type="project" value="InterPro"/>
</dbReference>
<dbReference type="GO" id="GO:0042274">
    <property type="term" value="P:ribosomal small subunit biogenesis"/>
    <property type="evidence" value="ECO:0007669"/>
    <property type="project" value="TreeGrafter"/>
</dbReference>
<dbReference type="GO" id="GO:0006412">
    <property type="term" value="P:translation"/>
    <property type="evidence" value="ECO:0007669"/>
    <property type="project" value="UniProtKB-UniRule"/>
</dbReference>
<dbReference type="CDD" id="cd00165">
    <property type="entry name" value="S4"/>
    <property type="match status" value="1"/>
</dbReference>
<dbReference type="FunFam" id="1.10.1050.10:FF:000001">
    <property type="entry name" value="30S ribosomal protein S4"/>
    <property type="match status" value="1"/>
</dbReference>
<dbReference type="FunFam" id="3.10.290.10:FF:000001">
    <property type="entry name" value="30S ribosomal protein S4"/>
    <property type="match status" value="1"/>
</dbReference>
<dbReference type="Gene3D" id="1.10.1050.10">
    <property type="entry name" value="Ribosomal Protein S4 Delta 41, Chain A, domain 1"/>
    <property type="match status" value="1"/>
</dbReference>
<dbReference type="Gene3D" id="3.10.290.10">
    <property type="entry name" value="RNA-binding S4 domain"/>
    <property type="match status" value="1"/>
</dbReference>
<dbReference type="HAMAP" id="MF_01306_B">
    <property type="entry name" value="Ribosomal_uS4_B"/>
    <property type="match status" value="1"/>
</dbReference>
<dbReference type="InterPro" id="IPR022801">
    <property type="entry name" value="Ribosomal_uS4"/>
</dbReference>
<dbReference type="InterPro" id="IPR005709">
    <property type="entry name" value="Ribosomal_uS4_bac-type"/>
</dbReference>
<dbReference type="InterPro" id="IPR018079">
    <property type="entry name" value="Ribosomal_uS4_CS"/>
</dbReference>
<dbReference type="InterPro" id="IPR001912">
    <property type="entry name" value="Ribosomal_uS4_N"/>
</dbReference>
<dbReference type="InterPro" id="IPR002942">
    <property type="entry name" value="S4_RNA-bd"/>
</dbReference>
<dbReference type="InterPro" id="IPR036986">
    <property type="entry name" value="S4_RNA-bd_sf"/>
</dbReference>
<dbReference type="NCBIfam" id="NF003717">
    <property type="entry name" value="PRK05327.1"/>
    <property type="match status" value="1"/>
</dbReference>
<dbReference type="NCBIfam" id="TIGR01017">
    <property type="entry name" value="rpsD_bact"/>
    <property type="match status" value="1"/>
</dbReference>
<dbReference type="PANTHER" id="PTHR11831">
    <property type="entry name" value="30S 40S RIBOSOMAL PROTEIN"/>
    <property type="match status" value="1"/>
</dbReference>
<dbReference type="PANTHER" id="PTHR11831:SF4">
    <property type="entry name" value="SMALL RIBOSOMAL SUBUNIT PROTEIN US4M"/>
    <property type="match status" value="1"/>
</dbReference>
<dbReference type="Pfam" id="PF00163">
    <property type="entry name" value="Ribosomal_S4"/>
    <property type="match status" value="1"/>
</dbReference>
<dbReference type="Pfam" id="PF01479">
    <property type="entry name" value="S4"/>
    <property type="match status" value="1"/>
</dbReference>
<dbReference type="SMART" id="SM01390">
    <property type="entry name" value="Ribosomal_S4"/>
    <property type="match status" value="1"/>
</dbReference>
<dbReference type="SMART" id="SM00363">
    <property type="entry name" value="S4"/>
    <property type="match status" value="1"/>
</dbReference>
<dbReference type="SUPFAM" id="SSF55174">
    <property type="entry name" value="Alpha-L RNA-binding motif"/>
    <property type="match status" value="1"/>
</dbReference>
<dbReference type="PROSITE" id="PS00632">
    <property type="entry name" value="RIBOSOMAL_S4"/>
    <property type="match status" value="1"/>
</dbReference>
<dbReference type="PROSITE" id="PS50889">
    <property type="entry name" value="S4"/>
    <property type="match status" value="1"/>
</dbReference>
<sequence length="210" mass="24050">MARNIGAVCRRCRRENLKLFLKGDRCYSDKCSFERRAFAPGQHGQARFKKVSDYAVQLREKQKVKSMYGVLEAQFRLTFEKAEAQKGVAGENLLILLERRLDNAVFRAGFASSRTQARQIVRHKHILINGKRVDIPSYQVSEGDVISLREKSRANAGVVDNLEAVVRRGVPTWLELDKDNFKASVKALPNREEITMPIQERLIVELYSKN</sequence>
<evidence type="ECO:0000255" key="1">
    <source>
        <dbReference type="HAMAP-Rule" id="MF_01306"/>
    </source>
</evidence>
<evidence type="ECO:0000305" key="2"/>
<name>RS4_DESPS</name>
<keyword id="KW-1185">Reference proteome</keyword>
<keyword id="KW-0687">Ribonucleoprotein</keyword>
<keyword id="KW-0689">Ribosomal protein</keyword>
<keyword id="KW-0694">RNA-binding</keyword>
<keyword id="KW-0699">rRNA-binding</keyword>
<comment type="function">
    <text evidence="1">One of the primary rRNA binding proteins, it binds directly to 16S rRNA where it nucleates assembly of the body of the 30S subunit.</text>
</comment>
<comment type="function">
    <text evidence="1">With S5 and S12 plays an important role in translational accuracy.</text>
</comment>
<comment type="subunit">
    <text evidence="1">Part of the 30S ribosomal subunit. Contacts protein S5. The interaction surface between S4 and S5 is involved in control of translational fidelity.</text>
</comment>
<comment type="similarity">
    <text evidence="1">Belongs to the universal ribosomal protein uS4 family.</text>
</comment>
<gene>
    <name evidence="1" type="primary">rpsD</name>
    <name type="ordered locus">DP1151</name>
</gene>